<comment type="function">
    <text evidence="1">Catalyzes the conversion of dihydroorotate to orotate with quinone as electron acceptor.</text>
</comment>
<comment type="catalytic activity">
    <reaction evidence="1">
        <text>(S)-dihydroorotate + a quinone = orotate + a quinol</text>
        <dbReference type="Rhea" id="RHEA:30187"/>
        <dbReference type="ChEBI" id="CHEBI:24646"/>
        <dbReference type="ChEBI" id="CHEBI:30839"/>
        <dbReference type="ChEBI" id="CHEBI:30864"/>
        <dbReference type="ChEBI" id="CHEBI:132124"/>
        <dbReference type="EC" id="1.3.5.2"/>
    </reaction>
</comment>
<comment type="cofactor">
    <cofactor evidence="1">
        <name>FMN</name>
        <dbReference type="ChEBI" id="CHEBI:58210"/>
    </cofactor>
    <text evidence="1">Binds 1 FMN per subunit.</text>
</comment>
<comment type="pathway">
    <text evidence="1">Pyrimidine metabolism; UMP biosynthesis via de novo pathway; orotate from (S)-dihydroorotate (quinone route): step 1/1.</text>
</comment>
<comment type="subunit">
    <text evidence="1">Monomer.</text>
</comment>
<comment type="subcellular location">
    <subcellularLocation>
        <location evidence="1">Cell membrane</location>
        <topology evidence="1">Peripheral membrane protein</topology>
    </subcellularLocation>
</comment>
<comment type="similarity">
    <text evidence="1">Belongs to the dihydroorotate dehydrogenase family. Type 2 subfamily.</text>
</comment>
<organism>
    <name type="scientific">Actinobacillus pleuropneumoniae serotype 5b (strain L20)</name>
    <dbReference type="NCBI Taxonomy" id="416269"/>
    <lineage>
        <taxon>Bacteria</taxon>
        <taxon>Pseudomonadati</taxon>
        <taxon>Pseudomonadota</taxon>
        <taxon>Gammaproteobacteria</taxon>
        <taxon>Pasteurellales</taxon>
        <taxon>Pasteurellaceae</taxon>
        <taxon>Actinobacillus</taxon>
    </lineage>
</organism>
<dbReference type="EC" id="1.3.5.2" evidence="1"/>
<dbReference type="EMBL" id="CP000569">
    <property type="protein sequence ID" value="ABN73872.1"/>
    <property type="molecule type" value="Genomic_DNA"/>
</dbReference>
<dbReference type="RefSeq" id="WP_011848464.1">
    <property type="nucleotide sequence ID" value="NC_009053.1"/>
</dbReference>
<dbReference type="SMR" id="A3N0D6"/>
<dbReference type="STRING" id="416269.APL_0774"/>
<dbReference type="EnsemblBacteria" id="ABN73872">
    <property type="protein sequence ID" value="ABN73872"/>
    <property type="gene ID" value="APL_0774"/>
</dbReference>
<dbReference type="KEGG" id="apl:APL_0774"/>
<dbReference type="PATRIC" id="fig|416269.6.peg.809"/>
<dbReference type="eggNOG" id="COG0167">
    <property type="taxonomic scope" value="Bacteria"/>
</dbReference>
<dbReference type="HOGENOM" id="CLU_013640_2_0_6"/>
<dbReference type="UniPathway" id="UPA00070">
    <property type="reaction ID" value="UER00946"/>
</dbReference>
<dbReference type="Proteomes" id="UP000001432">
    <property type="component" value="Chromosome"/>
</dbReference>
<dbReference type="GO" id="GO:0005737">
    <property type="term" value="C:cytoplasm"/>
    <property type="evidence" value="ECO:0007669"/>
    <property type="project" value="InterPro"/>
</dbReference>
<dbReference type="GO" id="GO:0005886">
    <property type="term" value="C:plasma membrane"/>
    <property type="evidence" value="ECO:0007669"/>
    <property type="project" value="UniProtKB-SubCell"/>
</dbReference>
<dbReference type="GO" id="GO:0106430">
    <property type="term" value="F:dihydroorotate dehydrogenase (quinone) activity"/>
    <property type="evidence" value="ECO:0007669"/>
    <property type="project" value="UniProtKB-EC"/>
</dbReference>
<dbReference type="GO" id="GO:0006207">
    <property type="term" value="P:'de novo' pyrimidine nucleobase biosynthetic process"/>
    <property type="evidence" value="ECO:0007669"/>
    <property type="project" value="InterPro"/>
</dbReference>
<dbReference type="GO" id="GO:0044205">
    <property type="term" value="P:'de novo' UMP biosynthetic process"/>
    <property type="evidence" value="ECO:0007669"/>
    <property type="project" value="UniProtKB-UniRule"/>
</dbReference>
<dbReference type="CDD" id="cd04738">
    <property type="entry name" value="DHOD_2_like"/>
    <property type="match status" value="1"/>
</dbReference>
<dbReference type="FunFam" id="3.20.20.70:FF:000028">
    <property type="entry name" value="Dihydroorotate dehydrogenase (quinone)"/>
    <property type="match status" value="1"/>
</dbReference>
<dbReference type="Gene3D" id="3.20.20.70">
    <property type="entry name" value="Aldolase class I"/>
    <property type="match status" value="1"/>
</dbReference>
<dbReference type="HAMAP" id="MF_00225">
    <property type="entry name" value="DHO_dh_type2"/>
    <property type="match status" value="1"/>
</dbReference>
<dbReference type="InterPro" id="IPR013785">
    <property type="entry name" value="Aldolase_TIM"/>
</dbReference>
<dbReference type="InterPro" id="IPR050074">
    <property type="entry name" value="DHO_dehydrogenase"/>
</dbReference>
<dbReference type="InterPro" id="IPR012135">
    <property type="entry name" value="Dihydroorotate_DH_1_2"/>
</dbReference>
<dbReference type="InterPro" id="IPR005719">
    <property type="entry name" value="Dihydroorotate_DH_2"/>
</dbReference>
<dbReference type="InterPro" id="IPR005720">
    <property type="entry name" value="Dihydroorotate_DH_cat"/>
</dbReference>
<dbReference type="InterPro" id="IPR001295">
    <property type="entry name" value="Dihydroorotate_DH_CS"/>
</dbReference>
<dbReference type="NCBIfam" id="NF003644">
    <property type="entry name" value="PRK05286.1-1"/>
    <property type="match status" value="1"/>
</dbReference>
<dbReference type="NCBIfam" id="NF003645">
    <property type="entry name" value="PRK05286.1-2"/>
    <property type="match status" value="1"/>
</dbReference>
<dbReference type="NCBIfam" id="NF003646">
    <property type="entry name" value="PRK05286.1-4"/>
    <property type="match status" value="1"/>
</dbReference>
<dbReference type="NCBIfam" id="NF003652">
    <property type="entry name" value="PRK05286.2-5"/>
    <property type="match status" value="1"/>
</dbReference>
<dbReference type="NCBIfam" id="TIGR01036">
    <property type="entry name" value="pyrD_sub2"/>
    <property type="match status" value="1"/>
</dbReference>
<dbReference type="PANTHER" id="PTHR48109:SF4">
    <property type="entry name" value="DIHYDROOROTATE DEHYDROGENASE (QUINONE), MITOCHONDRIAL"/>
    <property type="match status" value="1"/>
</dbReference>
<dbReference type="PANTHER" id="PTHR48109">
    <property type="entry name" value="DIHYDROOROTATE DEHYDROGENASE (QUINONE), MITOCHONDRIAL-RELATED"/>
    <property type="match status" value="1"/>
</dbReference>
<dbReference type="Pfam" id="PF01180">
    <property type="entry name" value="DHO_dh"/>
    <property type="match status" value="1"/>
</dbReference>
<dbReference type="PIRSF" id="PIRSF000164">
    <property type="entry name" value="DHO_oxidase"/>
    <property type="match status" value="1"/>
</dbReference>
<dbReference type="SUPFAM" id="SSF51395">
    <property type="entry name" value="FMN-linked oxidoreductases"/>
    <property type="match status" value="1"/>
</dbReference>
<dbReference type="PROSITE" id="PS00911">
    <property type="entry name" value="DHODEHASE_1"/>
    <property type="match status" value="1"/>
</dbReference>
<accession>A3N0D6</accession>
<keyword id="KW-1003">Cell membrane</keyword>
<keyword id="KW-0285">Flavoprotein</keyword>
<keyword id="KW-0288">FMN</keyword>
<keyword id="KW-0472">Membrane</keyword>
<keyword id="KW-0560">Oxidoreductase</keyword>
<keyword id="KW-0665">Pyrimidine biosynthesis</keyword>
<keyword id="KW-1185">Reference proteome</keyword>
<sequence>MYSLIRKCLFSMDAETAHNFSIQALKLAGKLPINVLPMPLNPVEVMGLQFKNPIGLAAGADKNGEAIDGFGKLGFGFIEVGTVTPVAQDGNPKPRQFRILEAEGIINRNGFNNLGVDVLVENVKKAKYDGIIGINIGKNAVTPIERALDDYQICLRKVYEHADYITVNISSPNTKNLRTLQYGEALDDLLRSLKSEQESLSQKFNRYKPLVLKIAPDLTDEEIASVADSLVRYKIDGVIAGNTTLSRDPVVGLKNAEQQGGLSGKPLNTLSTRLISTLAKELNGALPIIGSGGIHSVASGQEKIDAGASLLQVYSAMIYQGPALIQNLAKHIQVR</sequence>
<name>PYRD_ACTP2</name>
<reference key="1">
    <citation type="journal article" date="2008" name="J. Bacteriol.">
        <title>The complete genome sequence of Actinobacillus pleuropneumoniae L20 (serotype 5b).</title>
        <authorList>
            <person name="Foote S.J."/>
            <person name="Bosse J.T."/>
            <person name="Bouevitch A.B."/>
            <person name="Langford P.R."/>
            <person name="Young N.M."/>
            <person name="Nash J.H.E."/>
        </authorList>
    </citation>
    <scope>NUCLEOTIDE SEQUENCE [LARGE SCALE GENOMIC DNA]</scope>
    <source>
        <strain>L20</strain>
    </source>
</reference>
<evidence type="ECO:0000255" key="1">
    <source>
        <dbReference type="HAMAP-Rule" id="MF_00225"/>
    </source>
</evidence>
<gene>
    <name evidence="1" type="primary">pyrD</name>
    <name type="ordered locus">APL_0774</name>
</gene>
<protein>
    <recommendedName>
        <fullName evidence="1">Dihydroorotate dehydrogenase (quinone)</fullName>
        <ecNumber evidence="1">1.3.5.2</ecNumber>
    </recommendedName>
    <alternativeName>
        <fullName evidence="1">DHOdehase</fullName>
        <shortName evidence="1">DHOD</shortName>
        <shortName evidence="1">DHODase</shortName>
    </alternativeName>
    <alternativeName>
        <fullName evidence="1">Dihydroorotate oxidase</fullName>
    </alternativeName>
</protein>
<proteinExistence type="inferred from homology"/>
<feature type="chain" id="PRO_1000024146" description="Dihydroorotate dehydrogenase (quinone)">
    <location>
        <begin position="1"/>
        <end position="335"/>
    </location>
</feature>
<feature type="active site" description="Nucleophile" evidence="1">
    <location>
        <position position="171"/>
    </location>
</feature>
<feature type="binding site" evidence="1">
    <location>
        <begin position="58"/>
        <end position="62"/>
    </location>
    <ligand>
        <name>FMN</name>
        <dbReference type="ChEBI" id="CHEBI:58210"/>
    </ligand>
</feature>
<feature type="binding site" evidence="1">
    <location>
        <position position="62"/>
    </location>
    <ligand>
        <name>substrate</name>
    </ligand>
</feature>
<feature type="binding site" evidence="1">
    <location>
        <position position="82"/>
    </location>
    <ligand>
        <name>FMN</name>
        <dbReference type="ChEBI" id="CHEBI:58210"/>
    </ligand>
</feature>
<feature type="binding site" evidence="1">
    <location>
        <begin position="107"/>
        <end position="111"/>
    </location>
    <ligand>
        <name>substrate</name>
    </ligand>
</feature>
<feature type="binding site" evidence="1">
    <location>
        <position position="135"/>
    </location>
    <ligand>
        <name>FMN</name>
        <dbReference type="ChEBI" id="CHEBI:58210"/>
    </ligand>
</feature>
<feature type="binding site" evidence="1">
    <location>
        <position position="168"/>
    </location>
    <ligand>
        <name>FMN</name>
        <dbReference type="ChEBI" id="CHEBI:58210"/>
    </ligand>
</feature>
<feature type="binding site" evidence="1">
    <location>
        <position position="168"/>
    </location>
    <ligand>
        <name>substrate</name>
    </ligand>
</feature>
<feature type="binding site" evidence="1">
    <location>
        <position position="173"/>
    </location>
    <ligand>
        <name>substrate</name>
    </ligand>
</feature>
<feature type="binding site" evidence="1">
    <location>
        <position position="213"/>
    </location>
    <ligand>
        <name>FMN</name>
        <dbReference type="ChEBI" id="CHEBI:58210"/>
    </ligand>
</feature>
<feature type="binding site" evidence="1">
    <location>
        <position position="241"/>
    </location>
    <ligand>
        <name>FMN</name>
        <dbReference type="ChEBI" id="CHEBI:58210"/>
    </ligand>
</feature>
<feature type="binding site" evidence="1">
    <location>
        <begin position="242"/>
        <end position="243"/>
    </location>
    <ligand>
        <name>substrate</name>
    </ligand>
</feature>
<feature type="binding site" evidence="1">
    <location>
        <position position="264"/>
    </location>
    <ligand>
        <name>FMN</name>
        <dbReference type="ChEBI" id="CHEBI:58210"/>
    </ligand>
</feature>
<feature type="binding site" evidence="1">
    <location>
        <position position="293"/>
    </location>
    <ligand>
        <name>FMN</name>
        <dbReference type="ChEBI" id="CHEBI:58210"/>
    </ligand>
</feature>
<feature type="binding site" evidence="1">
    <location>
        <begin position="314"/>
        <end position="315"/>
    </location>
    <ligand>
        <name>FMN</name>
        <dbReference type="ChEBI" id="CHEBI:58210"/>
    </ligand>
</feature>